<feature type="chain" id="PRO_0000064230" description="Glycylpeptide N-tetradecanoyltransferase">
    <location>
        <begin position="1"/>
        <end position="410"/>
    </location>
</feature>
<feature type="binding site" evidence="1">
    <location>
        <position position="30"/>
    </location>
    <ligand>
        <name>tetradecanoyl-CoA</name>
        <dbReference type="ChEBI" id="CHEBI:57385"/>
    </ligand>
</feature>
<feature type="binding site" evidence="1">
    <location>
        <position position="31"/>
    </location>
    <ligand>
        <name>tetradecanoyl-CoA</name>
        <dbReference type="ChEBI" id="CHEBI:57385"/>
    </ligand>
</feature>
<feature type="binding site" evidence="1">
    <location>
        <position position="162"/>
    </location>
    <ligand>
        <name>tetradecanoyl-CoA</name>
        <dbReference type="ChEBI" id="CHEBI:57385"/>
    </ligand>
</feature>
<feature type="binding site" evidence="1">
    <location>
        <position position="163"/>
    </location>
    <ligand>
        <name>tetradecanoyl-CoA</name>
        <dbReference type="ChEBI" id="CHEBI:57385"/>
    </ligand>
</feature>
<feature type="binding site" evidence="1">
    <location>
        <position position="164"/>
    </location>
    <ligand>
        <name>tetradecanoyl-CoA</name>
        <dbReference type="ChEBI" id="CHEBI:57385"/>
    </ligand>
</feature>
<feature type="binding site" evidence="1">
    <location>
        <position position="165"/>
    </location>
    <ligand>
        <name>tetradecanoyl-CoA</name>
        <dbReference type="ChEBI" id="CHEBI:57385"/>
    </ligand>
</feature>
<feature type="binding site" evidence="1">
    <location>
        <position position="171"/>
    </location>
    <ligand>
        <name>tetradecanoyl-CoA</name>
        <dbReference type="ChEBI" id="CHEBI:57385"/>
    </ligand>
</feature>
<feature type="binding site" evidence="1">
    <location>
        <position position="173"/>
    </location>
    <ligand>
        <name>tetradecanoyl-CoA</name>
        <dbReference type="ChEBI" id="CHEBI:57385"/>
    </ligand>
</feature>
<feature type="binding site" evidence="1">
    <location>
        <position position="174"/>
    </location>
    <ligand>
        <name>tetradecanoyl-CoA</name>
        <dbReference type="ChEBI" id="CHEBI:57385"/>
    </ligand>
</feature>
<feature type="binding site" evidence="1">
    <location>
        <position position="175"/>
    </location>
    <ligand>
        <name>tetradecanoyl-CoA</name>
        <dbReference type="ChEBI" id="CHEBI:57385"/>
    </ligand>
</feature>
<protein>
    <recommendedName>
        <fullName>Glycylpeptide N-tetradecanoyltransferase</fullName>
        <ecNumber evidence="3">2.3.1.97</ecNumber>
    </recommendedName>
    <alternativeName>
        <fullName evidence="2">Myristoyl-CoA:protein N-myristoyltransferase</fullName>
    </alternativeName>
    <alternativeName>
        <fullName evidence="5">N-myristoyltransferase</fullName>
    </alternativeName>
</protein>
<reference key="1">
    <citation type="journal article" date="2002" name="Nature">
        <title>Genome sequence of the human malaria parasite Plasmodium falciparum.</title>
        <authorList>
            <person name="Gardner M.J."/>
            <person name="Hall N."/>
            <person name="Fung E."/>
            <person name="White O."/>
            <person name="Berriman M."/>
            <person name="Hyman R.W."/>
            <person name="Carlton J.M."/>
            <person name="Pain A."/>
            <person name="Nelson K.E."/>
            <person name="Bowman S."/>
            <person name="Paulsen I.T."/>
            <person name="James K.D."/>
            <person name="Eisen J.A."/>
            <person name="Rutherford K.M."/>
            <person name="Salzberg S.L."/>
            <person name="Craig A."/>
            <person name="Kyes S."/>
            <person name="Chan M.-S."/>
            <person name="Nene V."/>
            <person name="Shallom S.J."/>
            <person name="Suh B."/>
            <person name="Peterson J."/>
            <person name="Angiuoli S."/>
            <person name="Pertea M."/>
            <person name="Allen J."/>
            <person name="Selengut J."/>
            <person name="Haft D."/>
            <person name="Mather M.W."/>
            <person name="Vaidya A.B."/>
            <person name="Martin D.M.A."/>
            <person name="Fairlamb A.H."/>
            <person name="Fraunholz M.J."/>
            <person name="Roos D.S."/>
            <person name="Ralph S.A."/>
            <person name="McFadden G.I."/>
            <person name="Cummings L.M."/>
            <person name="Subramanian G.M."/>
            <person name="Mungall C."/>
            <person name="Venter J.C."/>
            <person name="Carucci D.J."/>
            <person name="Hoffman S.L."/>
            <person name="Newbold C."/>
            <person name="Davis R.W."/>
            <person name="Fraser C.M."/>
            <person name="Barrell B.G."/>
        </authorList>
    </citation>
    <scope>NUCLEOTIDE SEQUENCE [LARGE SCALE GENOMIC DNA]</scope>
    <source>
        <strain>3D7</strain>
    </source>
</reference>
<reference key="2">
    <citation type="journal article" date="2006" name="Mol. Biochem. Parasitol.">
        <title>Dual acylation of the 45 kDa gliding-associated protein (GAP45) in Plasmodium falciparum merozoites.</title>
        <authorList>
            <person name="Rees-Channer R.R."/>
            <person name="Martin S.R."/>
            <person name="Green J.L."/>
            <person name="Bowyer P.W."/>
            <person name="Grainger M."/>
            <person name="Molloy J.E."/>
            <person name="Holder A.A."/>
        </authorList>
    </citation>
    <scope>FUNCTION</scope>
    <scope>CATALYTIC ACTIVITY</scope>
</reference>
<reference key="3">
    <citation type="journal article" date="2021" name="PLoS Biol.">
        <title>Inhibition of protein N-myristoylation blocks Plasmodium falciparum intraerythrocytic development, egress and invasion.</title>
        <authorList>
            <person name="Schlott A.C."/>
            <person name="Knuepfer E."/>
            <person name="Green J.L."/>
            <person name="Hobson P."/>
            <person name="Borg A.J."/>
            <person name="Morales-Sanfrutos J."/>
            <person name="Perrin A.J."/>
            <person name="Maclachlan C."/>
            <person name="Collinson L.M."/>
            <person name="Snijders A.P."/>
            <person name="Tate E.W."/>
            <person name="Holder A.A."/>
        </authorList>
    </citation>
    <scope>FUNCTION</scope>
</reference>
<keyword id="KW-0012">Acyltransferase</keyword>
<keyword id="KW-0963">Cytoplasm</keyword>
<keyword id="KW-1185">Reference proteome</keyword>
<keyword id="KW-0808">Transferase</keyword>
<comment type="function">
    <text evidence="2 3 4">Adds a myristoyl group to the N-terminal glycine residue of certain cellular proteins (PubMed:16750579). Myristoylates adenylate kinase AK2 (By similarity). During the asexual blood stage, may myristoylate proteins such as ARO, CDPK1 and GAP45 (PubMed:16750579, PubMed:34695132). Probably by mediating protein myristoylation, plays a role in the assembly of the inner membrane complex during the early stages of schizogony and in the formation of rhoptries in the late stages and thus merozoite egress (PubMed:34695132).</text>
</comment>
<comment type="catalytic activity">
    <reaction evidence="3">
        <text>N-terminal glycyl-[protein] + tetradecanoyl-CoA = N-tetradecanoylglycyl-[protein] + CoA + H(+)</text>
        <dbReference type="Rhea" id="RHEA:15521"/>
        <dbReference type="Rhea" id="RHEA-COMP:12666"/>
        <dbReference type="Rhea" id="RHEA-COMP:12667"/>
        <dbReference type="ChEBI" id="CHEBI:15378"/>
        <dbReference type="ChEBI" id="CHEBI:57287"/>
        <dbReference type="ChEBI" id="CHEBI:57385"/>
        <dbReference type="ChEBI" id="CHEBI:64723"/>
        <dbReference type="ChEBI" id="CHEBI:133050"/>
        <dbReference type="EC" id="2.3.1.97"/>
    </reaction>
</comment>
<comment type="subunit">
    <text evidence="2">Heterodimer composed of NMT and AK2; AK2 myristoylation stabilizes the complex.</text>
</comment>
<comment type="subcellular location">
    <subcellularLocation>
        <location evidence="1">Cytoplasm</location>
    </subcellularLocation>
</comment>
<comment type="similarity">
    <text evidence="6">Belongs to the NMT family.</text>
</comment>
<sequence length="410" mass="47970">MNDDKKDFVGRDLYQLIRNAKDKIKIDYKFWYTQPVPKINDEFDENVNEPFISDNKVEDVRKEEYKLPSGYAWCVCDITKENDRSDIYNLLTDNYVEDDDNVFRFNYSSEFLLWALSSPNYVKNWHIGVKYESTNKLVGFISAIPIDMCVNKNIIKMAEVNFLCVHKSLRSKRLAPVLIKEITRRINLESIWQAIYTAGVYLPKPISTARYFHRSINVKKLIEIGFSCLNTRLTMSRAIKLYRIDDTLNIKNLRLMKKKDIDGLQKLLNEHLKQYNLHAIFSKEDVAHWFTPIDQVIYTYVNEENGEIKDLISFYSLPSKVLGNNKYNILNAAFSFYNITTTTTFKNLIQDAICLAKRNNFDVFNALEVMDNYSVFQDLKFGEGDGSLKYYLYNWKCASCHPSKIGIVLL</sequence>
<evidence type="ECO:0000250" key="1">
    <source>
        <dbReference type="UniProtKB" id="P30419"/>
    </source>
</evidence>
<evidence type="ECO:0000250" key="2">
    <source>
        <dbReference type="UniProtKB" id="Q9U419"/>
    </source>
</evidence>
<evidence type="ECO:0000269" key="3">
    <source>
    </source>
</evidence>
<evidence type="ECO:0000269" key="4">
    <source>
    </source>
</evidence>
<evidence type="ECO:0000303" key="5">
    <source>
    </source>
</evidence>
<evidence type="ECO:0000305" key="6"/>
<dbReference type="EC" id="2.3.1.97" evidence="3"/>
<dbReference type="EMBL" id="LN999946">
    <property type="protein sequence ID" value="CZT99838.1"/>
    <property type="molecule type" value="Genomic_DNA"/>
</dbReference>
<dbReference type="RefSeq" id="XP_001348300.1">
    <property type="nucleotide sequence ID" value="XM_001348264.1"/>
</dbReference>
<dbReference type="SMR" id="Q8ILW6"/>
<dbReference type="STRING" id="36329.Q8ILW6"/>
<dbReference type="BindingDB" id="Q8ILW6"/>
<dbReference type="ChEMBL" id="CHEMBL2169722"/>
<dbReference type="GuidetoPHARMACOLOGY" id="2955"/>
<dbReference type="SwissPalm" id="Q8ILW6"/>
<dbReference type="PaxDb" id="5833-PF14_0127"/>
<dbReference type="EnsemblProtists" id="CZT99838">
    <property type="protein sequence ID" value="CZT99838"/>
    <property type="gene ID" value="PF3D7_1412800"/>
</dbReference>
<dbReference type="GeneID" id="811708"/>
<dbReference type="KEGG" id="pfa:PF3D7_1412800"/>
<dbReference type="VEuPathDB" id="PlasmoDB:PF3D7_1412800"/>
<dbReference type="HOGENOM" id="CLU_022882_0_1_1"/>
<dbReference type="OMA" id="GWKRDWH"/>
<dbReference type="OrthoDB" id="60315at2759"/>
<dbReference type="PhylomeDB" id="Q8ILW6"/>
<dbReference type="BRENDA" id="2.3.1.97">
    <property type="organism ID" value="4889"/>
</dbReference>
<dbReference type="Proteomes" id="UP000001450">
    <property type="component" value="Chromosome 14"/>
</dbReference>
<dbReference type="GO" id="GO:0005829">
    <property type="term" value="C:cytosol"/>
    <property type="evidence" value="ECO:0000318"/>
    <property type="project" value="GO_Central"/>
</dbReference>
<dbReference type="GO" id="GO:0004379">
    <property type="term" value="F:glycylpeptide N-tetradecanoyltransferase activity"/>
    <property type="evidence" value="ECO:0000314"/>
    <property type="project" value="UniProtKB"/>
</dbReference>
<dbReference type="GO" id="GO:0018008">
    <property type="term" value="P:N-terminal peptidyl-glycine N-myristoylation"/>
    <property type="evidence" value="ECO:0000314"/>
    <property type="project" value="UniProtKB"/>
</dbReference>
<dbReference type="GO" id="GO:0072657">
    <property type="term" value="P:protein localization to membrane"/>
    <property type="evidence" value="ECO:0000318"/>
    <property type="project" value="GO_Central"/>
</dbReference>
<dbReference type="FunFam" id="3.40.630.170:FF:000001">
    <property type="entry name" value="Glycylpeptide N-tetradecanoyltransferase"/>
    <property type="match status" value="1"/>
</dbReference>
<dbReference type="Gene3D" id="3.40.630.170">
    <property type="match status" value="1"/>
</dbReference>
<dbReference type="InterPro" id="IPR016181">
    <property type="entry name" value="Acyl_CoA_acyltransferase"/>
</dbReference>
<dbReference type="InterPro" id="IPR000903">
    <property type="entry name" value="NMT"/>
</dbReference>
<dbReference type="InterPro" id="IPR022677">
    <property type="entry name" value="NMT_C"/>
</dbReference>
<dbReference type="InterPro" id="IPR022678">
    <property type="entry name" value="NMT_CS"/>
</dbReference>
<dbReference type="InterPro" id="IPR022676">
    <property type="entry name" value="NMT_N"/>
</dbReference>
<dbReference type="PANTHER" id="PTHR11377:SF5">
    <property type="entry name" value="GLYCYLPEPTIDE N-TETRADECANOYLTRANSFERASE"/>
    <property type="match status" value="1"/>
</dbReference>
<dbReference type="PANTHER" id="PTHR11377">
    <property type="entry name" value="N-MYRISTOYL TRANSFERASE"/>
    <property type="match status" value="1"/>
</dbReference>
<dbReference type="Pfam" id="PF01233">
    <property type="entry name" value="NMT"/>
    <property type="match status" value="1"/>
</dbReference>
<dbReference type="Pfam" id="PF02799">
    <property type="entry name" value="NMT_C"/>
    <property type="match status" value="1"/>
</dbReference>
<dbReference type="PIRSF" id="PIRSF015892">
    <property type="entry name" value="N-myristl_transf"/>
    <property type="match status" value="1"/>
</dbReference>
<dbReference type="SUPFAM" id="SSF55729">
    <property type="entry name" value="Acyl-CoA N-acyltransferases (Nat)"/>
    <property type="match status" value="2"/>
</dbReference>
<dbReference type="PROSITE" id="PS00975">
    <property type="entry name" value="NMT_1"/>
    <property type="match status" value="1"/>
</dbReference>
<dbReference type="PROSITE" id="PS00976">
    <property type="entry name" value="NMT_2"/>
    <property type="match status" value="1"/>
</dbReference>
<accession>Q8ILW6</accession>
<accession>A0A144A366</accession>
<proteinExistence type="evidence at protein level"/>
<name>NMT_PLAF7</name>
<gene>
    <name evidence="5" type="primary">NMT</name>
    <name type="ORF">PF14_0127</name>
    <name type="ORF">PF3D7_1412800</name>
</gene>
<organism>
    <name type="scientific">Plasmodium falciparum (isolate 3D7)</name>
    <dbReference type="NCBI Taxonomy" id="36329"/>
    <lineage>
        <taxon>Eukaryota</taxon>
        <taxon>Sar</taxon>
        <taxon>Alveolata</taxon>
        <taxon>Apicomplexa</taxon>
        <taxon>Aconoidasida</taxon>
        <taxon>Haemosporida</taxon>
        <taxon>Plasmodiidae</taxon>
        <taxon>Plasmodium</taxon>
        <taxon>Plasmodium (Laverania)</taxon>
    </lineage>
</organism>